<name>CLE11_ARATH</name>
<keyword id="KW-0217">Developmental protein</keyword>
<keyword id="KW-0221">Differentiation</keyword>
<keyword id="KW-0325">Glycoprotein</keyword>
<keyword id="KW-0379">Hydroxylation</keyword>
<keyword id="KW-1185">Reference proteome</keyword>
<keyword id="KW-0964">Secreted</keyword>
<keyword id="KW-0732">Signal</keyword>
<comment type="function">
    <molecule>CLE11p</molecule>
    <text evidence="4 5 6 7">Extracellular signal peptide that regulates cell fate. Represses root apical meristem maintenance. Regulates the transition of protophloem cells from proliferation to differentiation, thus impinging on postembryonic growth capacity of the root meristem; this signaling pathway requires CRN and CLV2 (PubMed:28607033).</text>
</comment>
<comment type="subcellular location">
    <molecule>CLE11p</molecule>
    <subcellularLocation>
        <location evidence="1">Secreted</location>
        <location evidence="1">Extracellular space</location>
    </subcellularLocation>
</comment>
<comment type="tissue specificity">
    <molecule>CLE11p</molecule>
    <text evidence="3">Mostly expressed in seedlings, roots and siliques, and, to a lower extent, in leaves, flowers, stems and apex.</text>
</comment>
<comment type="PTM">
    <molecule>CLE11p</molecule>
    <text evidence="1">The O-glycosylation (arabinosylation) of the hydroxyproline Pro-94 enhances binding affinity of the CLE11p peptide for its receptor.</text>
</comment>
<comment type="similarity">
    <text evidence="9">Belongs to the CLV3/ESR signal peptide family.</text>
</comment>
<sequence>MTKQPKPCSFLFHISLLSALFVFLLISFAFTTSYKLKSGINSLGHKRILASNFDFTPFLKNKDRTQRQRQSPSLTVKENGFWYNDEERVVPSGPNPLHH</sequence>
<proteinExistence type="evidence at transcript level"/>
<organism>
    <name type="scientific">Arabidopsis thaliana</name>
    <name type="common">Mouse-ear cress</name>
    <dbReference type="NCBI Taxonomy" id="3702"/>
    <lineage>
        <taxon>Eukaryota</taxon>
        <taxon>Viridiplantae</taxon>
        <taxon>Streptophyta</taxon>
        <taxon>Embryophyta</taxon>
        <taxon>Tracheophyta</taxon>
        <taxon>Spermatophyta</taxon>
        <taxon>Magnoliopsida</taxon>
        <taxon>eudicotyledons</taxon>
        <taxon>Gunneridae</taxon>
        <taxon>Pentapetalae</taxon>
        <taxon>rosids</taxon>
        <taxon>malvids</taxon>
        <taxon>Brassicales</taxon>
        <taxon>Brassicaceae</taxon>
        <taxon>Camelineae</taxon>
        <taxon>Arabidopsis</taxon>
    </lineage>
</organism>
<evidence type="ECO:0000250" key="1">
    <source>
        <dbReference type="UniProtKB" id="O49519"/>
    </source>
</evidence>
<evidence type="ECO:0000255" key="2"/>
<evidence type="ECO:0000269" key="3">
    <source>
    </source>
</evidence>
<evidence type="ECO:0000269" key="4">
    <source>
    </source>
</evidence>
<evidence type="ECO:0000269" key="5">
    <source>
    </source>
</evidence>
<evidence type="ECO:0000269" key="6">
    <source>
    </source>
</evidence>
<evidence type="ECO:0000269" key="7">
    <source>
    </source>
</evidence>
<evidence type="ECO:0000303" key="8">
    <source>
    </source>
</evidence>
<evidence type="ECO:0000305" key="9"/>
<evidence type="ECO:0000312" key="10">
    <source>
        <dbReference type="Araport" id="AT1G49005"/>
    </source>
</evidence>
<evidence type="ECO:0000312" key="11">
    <source>
        <dbReference type="EMBL" id="AC016041"/>
    </source>
</evidence>
<gene>
    <name evidence="8" type="primary">CLE11</name>
    <name evidence="10" type="ordered locus">At1g49005</name>
    <name evidence="11" type="ORF">F27J15</name>
</gene>
<accession>Q3ECU1</accession>
<dbReference type="EMBL" id="AC016041">
    <property type="status" value="NOT_ANNOTATED_CDS"/>
    <property type="molecule type" value="Genomic_DNA"/>
</dbReference>
<dbReference type="EMBL" id="CP002684">
    <property type="protein sequence ID" value="AEE32380.1"/>
    <property type="molecule type" value="Genomic_DNA"/>
</dbReference>
<dbReference type="RefSeq" id="NP_683413.1">
    <property type="nucleotide sequence ID" value="NM_148572.3"/>
</dbReference>
<dbReference type="SMR" id="Q3ECU1"/>
<dbReference type="STRING" id="3702.Q3ECU1"/>
<dbReference type="GlyCosmos" id="Q3ECU1">
    <property type="glycosylation" value="1 site, No reported glycans"/>
</dbReference>
<dbReference type="PaxDb" id="3702-AT1G49005.1"/>
<dbReference type="EnsemblPlants" id="AT1G49005.1">
    <property type="protein sequence ID" value="AT1G49005.1"/>
    <property type="gene ID" value="AT1G49005"/>
</dbReference>
<dbReference type="GeneID" id="841323"/>
<dbReference type="Gramene" id="AT1G49005.1">
    <property type="protein sequence ID" value="AT1G49005.1"/>
    <property type="gene ID" value="AT1G49005"/>
</dbReference>
<dbReference type="KEGG" id="ath:AT1G49005"/>
<dbReference type="Araport" id="AT1G49005"/>
<dbReference type="TAIR" id="AT1G49005">
    <property type="gene designation" value="CLE11"/>
</dbReference>
<dbReference type="HOGENOM" id="CLU_145048_0_0_1"/>
<dbReference type="InParanoid" id="Q3ECU1"/>
<dbReference type="OMA" id="KQPKPCS"/>
<dbReference type="OrthoDB" id="753861at2759"/>
<dbReference type="PhylomeDB" id="Q3ECU1"/>
<dbReference type="PRO" id="PR:Q3ECU1"/>
<dbReference type="Proteomes" id="UP000006548">
    <property type="component" value="Chromosome 1"/>
</dbReference>
<dbReference type="ExpressionAtlas" id="Q3ECU1">
    <property type="expression patterns" value="baseline and differential"/>
</dbReference>
<dbReference type="GO" id="GO:0048046">
    <property type="term" value="C:apoplast"/>
    <property type="evidence" value="ECO:0000250"/>
    <property type="project" value="UniProtKB"/>
</dbReference>
<dbReference type="GO" id="GO:0033612">
    <property type="term" value="F:receptor serine/threonine kinase binding"/>
    <property type="evidence" value="ECO:0000353"/>
    <property type="project" value="UniProtKB"/>
</dbReference>
<dbReference type="GO" id="GO:0045168">
    <property type="term" value="P:cell-cell signaling involved in cell fate commitment"/>
    <property type="evidence" value="ECO:0000250"/>
    <property type="project" value="UniProtKB"/>
</dbReference>
<dbReference type="GO" id="GO:0010078">
    <property type="term" value="P:maintenance of root meristem identity"/>
    <property type="evidence" value="ECO:0000314"/>
    <property type="project" value="UniProtKB"/>
</dbReference>
<dbReference type="GO" id="GO:0010088">
    <property type="term" value="P:phloem development"/>
    <property type="evidence" value="ECO:0000314"/>
    <property type="project" value="UniProtKB"/>
</dbReference>
<dbReference type="GO" id="GO:0045595">
    <property type="term" value="P:regulation of cell differentiation"/>
    <property type="evidence" value="ECO:0000314"/>
    <property type="project" value="UniProtKB"/>
</dbReference>
<dbReference type="InterPro" id="IPR039618">
    <property type="entry name" value="CLE9-13"/>
</dbReference>
<dbReference type="PANTHER" id="PTHR34359">
    <property type="entry name" value="CLAVATA3/ESR (CLE)-RELATED PROTEIN 10"/>
    <property type="match status" value="1"/>
</dbReference>
<dbReference type="PANTHER" id="PTHR34359:SF27">
    <property type="entry name" value="CLAVATA3_ESR (CLE)-RELATED PROTEIN 11-RELATED"/>
    <property type="match status" value="1"/>
</dbReference>
<protein>
    <recommendedName>
        <fullName evidence="8">CLAVATA3/ESR (CLE)-related protein 11</fullName>
    </recommendedName>
    <component>
        <recommendedName>
            <fullName evidence="8">CLE11p</fullName>
        </recommendedName>
    </component>
</protein>
<reference key="1">
    <citation type="journal article" date="2000" name="Nature">
        <title>Sequence and analysis of chromosome 1 of the plant Arabidopsis thaliana.</title>
        <authorList>
            <person name="Theologis A."/>
            <person name="Ecker J.R."/>
            <person name="Palm C.J."/>
            <person name="Federspiel N.A."/>
            <person name="Kaul S."/>
            <person name="White O."/>
            <person name="Alonso J."/>
            <person name="Altafi H."/>
            <person name="Araujo R."/>
            <person name="Bowman C.L."/>
            <person name="Brooks S.Y."/>
            <person name="Buehler E."/>
            <person name="Chan A."/>
            <person name="Chao Q."/>
            <person name="Chen H."/>
            <person name="Cheuk R.F."/>
            <person name="Chin C.W."/>
            <person name="Chung M.K."/>
            <person name="Conn L."/>
            <person name="Conway A.B."/>
            <person name="Conway A.R."/>
            <person name="Creasy T.H."/>
            <person name="Dewar K."/>
            <person name="Dunn P."/>
            <person name="Etgu P."/>
            <person name="Feldblyum T.V."/>
            <person name="Feng J.-D."/>
            <person name="Fong B."/>
            <person name="Fujii C.Y."/>
            <person name="Gill J.E."/>
            <person name="Goldsmith A.D."/>
            <person name="Haas B."/>
            <person name="Hansen N.F."/>
            <person name="Hughes B."/>
            <person name="Huizar L."/>
            <person name="Hunter J.L."/>
            <person name="Jenkins J."/>
            <person name="Johnson-Hopson C."/>
            <person name="Khan S."/>
            <person name="Khaykin E."/>
            <person name="Kim C.J."/>
            <person name="Koo H.L."/>
            <person name="Kremenetskaia I."/>
            <person name="Kurtz D.B."/>
            <person name="Kwan A."/>
            <person name="Lam B."/>
            <person name="Langin-Hooper S."/>
            <person name="Lee A."/>
            <person name="Lee J.M."/>
            <person name="Lenz C.A."/>
            <person name="Li J.H."/>
            <person name="Li Y.-P."/>
            <person name="Lin X."/>
            <person name="Liu S.X."/>
            <person name="Liu Z.A."/>
            <person name="Luros J.S."/>
            <person name="Maiti R."/>
            <person name="Marziali A."/>
            <person name="Militscher J."/>
            <person name="Miranda M."/>
            <person name="Nguyen M."/>
            <person name="Nierman W.C."/>
            <person name="Osborne B.I."/>
            <person name="Pai G."/>
            <person name="Peterson J."/>
            <person name="Pham P.K."/>
            <person name="Rizzo M."/>
            <person name="Rooney T."/>
            <person name="Rowley D."/>
            <person name="Sakano H."/>
            <person name="Salzberg S.L."/>
            <person name="Schwartz J.R."/>
            <person name="Shinn P."/>
            <person name="Southwick A.M."/>
            <person name="Sun H."/>
            <person name="Tallon L.J."/>
            <person name="Tambunga G."/>
            <person name="Toriumi M.J."/>
            <person name="Town C.D."/>
            <person name="Utterback T."/>
            <person name="Van Aken S."/>
            <person name="Vaysberg M."/>
            <person name="Vysotskaia V.S."/>
            <person name="Walker M."/>
            <person name="Wu D."/>
            <person name="Yu G."/>
            <person name="Fraser C.M."/>
            <person name="Venter J.C."/>
            <person name="Davis R.W."/>
        </authorList>
    </citation>
    <scope>NUCLEOTIDE SEQUENCE [LARGE SCALE GENOMIC DNA]</scope>
    <source>
        <strain>cv. Columbia</strain>
    </source>
</reference>
<reference key="2">
    <citation type="journal article" date="2017" name="Plant J.">
        <title>Araport11: a complete reannotation of the Arabidopsis thaliana reference genome.</title>
        <authorList>
            <person name="Cheng C.Y."/>
            <person name="Krishnakumar V."/>
            <person name="Chan A.P."/>
            <person name="Thibaud-Nissen F."/>
            <person name="Schobel S."/>
            <person name="Town C.D."/>
        </authorList>
    </citation>
    <scope>GENOME REANNOTATION</scope>
    <source>
        <strain>cv. Columbia</strain>
    </source>
</reference>
<reference key="3">
    <citation type="journal article" date="2001" name="Plant Physiol.">
        <title>A large family of genes that share homology with CLAVATA3.</title>
        <authorList>
            <person name="Cock J.M."/>
            <person name="McCormick S."/>
        </authorList>
    </citation>
    <scope>GENE FAMILY</scope>
    <scope>NOMENCLATURE</scope>
</reference>
<reference key="4">
    <citation type="journal article" date="2003" name="Plant Mol. Biol.">
        <title>The Arabidopsis CLV3-like (CLE) genes are expressed in diverse tissues and encode secreted proteins.</title>
        <authorList>
            <person name="Sharma V.K."/>
            <person name="Ramirez J."/>
            <person name="Fletcher J.C."/>
        </authorList>
    </citation>
    <scope>TISSUE SPECIFICITY</scope>
</reference>
<reference key="5">
    <citation type="journal article" date="2006" name="Plant Physiol.">
        <title>Evidence for functional conservation, sufficiency, and proteolytic processing of the CLAVATA3 CLE domain.</title>
        <authorList>
            <person name="Ni J."/>
            <person name="Clark S.E."/>
        </authorList>
    </citation>
    <scope>FUNCTION</scope>
</reference>
<reference key="6">
    <citation type="journal article" date="2006" name="Plant Physiol.">
        <title>Gain-of-function phenotypes of many CLAVATA3/ESR genes, including four new family members, correlate with tandem variations in the conserved CLAVATA3/ESR domain.</title>
        <authorList>
            <person name="Strabala T.J."/>
            <person name="O'donnell P.J."/>
            <person name="Smit A.-M."/>
            <person name="Ampomah-Dwamena C."/>
            <person name="Martin E.J."/>
            <person name="Netzler N."/>
            <person name="Nieuwenhuizen N.J."/>
            <person name="Quinn B.D."/>
            <person name="Foote H.C.C."/>
            <person name="Hudson K.R."/>
        </authorList>
    </citation>
    <scope>FUNCTION</scope>
    <scope>GENE FAMILY</scope>
</reference>
<reference key="7">
    <citation type="journal article" date="2006" name="Science">
        <title>Dodeca-CLE peptides as suppressors of plant stem cell differentiation.</title>
        <authorList>
            <person name="Ito Y."/>
            <person name="Nakanomyo I."/>
            <person name="Motose H."/>
            <person name="Iwamoto K."/>
            <person name="Sawa S."/>
            <person name="Dohmae N."/>
            <person name="Fukuda H."/>
        </authorList>
    </citation>
    <scope>FUNCTION</scope>
</reference>
<reference key="8">
    <citation type="journal article" date="2008" name="Cell. Mol. Life Sci.">
        <title>The CLE family of plant polypeptide signaling molecules.</title>
        <authorList>
            <person name="Jun J.H."/>
            <person name="Fiume E."/>
            <person name="Fletcher J.C."/>
        </authorList>
    </citation>
    <scope>REVIEW</scope>
</reference>
<reference key="9">
    <citation type="journal article" date="2008" name="Curr. Opin. Plant Biol.">
        <title>Diverse and conserved roles of CLE peptides.</title>
        <authorList>
            <person name="Mitchum M.G."/>
            <person name="Wang X."/>
            <person name="Davis E.L."/>
        </authorList>
    </citation>
    <scope>REVIEW</scope>
</reference>
<reference key="10">
    <citation type="journal article" date="2010" name="Protoplasma">
        <title>CLE peptide signaling during plant development.</title>
        <authorList>
            <person name="Wang G."/>
            <person name="Fiers M."/>
        </authorList>
    </citation>
    <scope>REVIEW</scope>
</reference>
<reference key="11">
    <citation type="journal article" date="2017" name="EMBO Rep.">
        <title>Perception of root-active CLE peptides requires CORYNE function in the phloem vasculature.</title>
        <authorList>
            <person name="Hazak O."/>
            <person name="Brandt B."/>
            <person name="Cattaneo P."/>
            <person name="Santiago J."/>
            <person name="Rodriguez-Villalon A."/>
            <person name="Hothorn M."/>
            <person name="Hardtke C.S."/>
        </authorList>
    </citation>
    <scope>FUNCTION</scope>
    <source>
        <strain>cv. Columbia</strain>
    </source>
</reference>
<feature type="signal peptide" evidence="2">
    <location>
        <begin position="1"/>
        <end position="31"/>
    </location>
</feature>
<feature type="chain" id="PRO_0000401253" description="CLAVATA3/ESR (CLE)-related protein 11">
    <location>
        <begin position="32"/>
        <end position="99"/>
    </location>
</feature>
<feature type="peptide" id="PRO_0000401254" description="CLE11p" evidence="1">
    <location>
        <begin position="88"/>
        <end position="99"/>
    </location>
</feature>
<feature type="modified residue" description="Hydroxyproline" evidence="1">
    <location>
        <position position="91"/>
    </location>
</feature>
<feature type="modified residue" description="Hydroxyproline" evidence="1">
    <location>
        <position position="94"/>
    </location>
</feature>
<feature type="glycosylation site" description="O-linked (Ara...) hydroxyproline" evidence="1">
    <location>
        <position position="94"/>
    </location>
</feature>